<evidence type="ECO:0000255" key="1">
    <source>
        <dbReference type="HAMAP-Rule" id="MF_00291"/>
    </source>
</evidence>
<evidence type="ECO:0000256" key="2">
    <source>
        <dbReference type="SAM" id="MobiDB-lite"/>
    </source>
</evidence>
<evidence type="ECO:0000305" key="3"/>
<dbReference type="EMBL" id="CP000769">
    <property type="protein sequence ID" value="ABS24512.1"/>
    <property type="molecule type" value="Genomic_DNA"/>
</dbReference>
<dbReference type="RefSeq" id="WP_011984618.1">
    <property type="nucleotide sequence ID" value="NC_009675.1"/>
</dbReference>
<dbReference type="SMR" id="A7H716"/>
<dbReference type="STRING" id="404589.Anae109_0295"/>
<dbReference type="KEGG" id="afw:Anae109_0295"/>
<dbReference type="eggNOG" id="COG0052">
    <property type="taxonomic scope" value="Bacteria"/>
</dbReference>
<dbReference type="HOGENOM" id="CLU_040318_0_2_7"/>
<dbReference type="OrthoDB" id="9808036at2"/>
<dbReference type="Proteomes" id="UP000006382">
    <property type="component" value="Chromosome"/>
</dbReference>
<dbReference type="GO" id="GO:0022627">
    <property type="term" value="C:cytosolic small ribosomal subunit"/>
    <property type="evidence" value="ECO:0007669"/>
    <property type="project" value="TreeGrafter"/>
</dbReference>
<dbReference type="GO" id="GO:0003735">
    <property type="term" value="F:structural constituent of ribosome"/>
    <property type="evidence" value="ECO:0007669"/>
    <property type="project" value="InterPro"/>
</dbReference>
<dbReference type="GO" id="GO:0006412">
    <property type="term" value="P:translation"/>
    <property type="evidence" value="ECO:0007669"/>
    <property type="project" value="UniProtKB-UniRule"/>
</dbReference>
<dbReference type="CDD" id="cd01425">
    <property type="entry name" value="RPS2"/>
    <property type="match status" value="1"/>
</dbReference>
<dbReference type="FunFam" id="1.10.287.610:FF:000001">
    <property type="entry name" value="30S ribosomal protein S2"/>
    <property type="match status" value="1"/>
</dbReference>
<dbReference type="Gene3D" id="3.40.50.10490">
    <property type="entry name" value="Glucose-6-phosphate isomerase like protein, domain 1"/>
    <property type="match status" value="1"/>
</dbReference>
<dbReference type="Gene3D" id="1.10.287.610">
    <property type="entry name" value="Helix hairpin bin"/>
    <property type="match status" value="1"/>
</dbReference>
<dbReference type="HAMAP" id="MF_00291_B">
    <property type="entry name" value="Ribosomal_uS2_B"/>
    <property type="match status" value="1"/>
</dbReference>
<dbReference type="InterPro" id="IPR001865">
    <property type="entry name" value="Ribosomal_uS2"/>
</dbReference>
<dbReference type="InterPro" id="IPR005706">
    <property type="entry name" value="Ribosomal_uS2_bac/mit/plastid"/>
</dbReference>
<dbReference type="InterPro" id="IPR018130">
    <property type="entry name" value="Ribosomal_uS2_CS"/>
</dbReference>
<dbReference type="InterPro" id="IPR023591">
    <property type="entry name" value="Ribosomal_uS2_flav_dom_sf"/>
</dbReference>
<dbReference type="NCBIfam" id="TIGR01011">
    <property type="entry name" value="rpsB_bact"/>
    <property type="match status" value="1"/>
</dbReference>
<dbReference type="PANTHER" id="PTHR12534">
    <property type="entry name" value="30S RIBOSOMAL PROTEIN S2 PROKARYOTIC AND ORGANELLAR"/>
    <property type="match status" value="1"/>
</dbReference>
<dbReference type="PANTHER" id="PTHR12534:SF0">
    <property type="entry name" value="SMALL RIBOSOMAL SUBUNIT PROTEIN US2M"/>
    <property type="match status" value="1"/>
</dbReference>
<dbReference type="Pfam" id="PF00318">
    <property type="entry name" value="Ribosomal_S2"/>
    <property type="match status" value="1"/>
</dbReference>
<dbReference type="PRINTS" id="PR00395">
    <property type="entry name" value="RIBOSOMALS2"/>
</dbReference>
<dbReference type="SUPFAM" id="SSF52313">
    <property type="entry name" value="Ribosomal protein S2"/>
    <property type="match status" value="1"/>
</dbReference>
<dbReference type="PROSITE" id="PS00962">
    <property type="entry name" value="RIBOSOMAL_S2_1"/>
    <property type="match status" value="1"/>
</dbReference>
<dbReference type="PROSITE" id="PS00963">
    <property type="entry name" value="RIBOSOMAL_S2_2"/>
    <property type="match status" value="1"/>
</dbReference>
<comment type="similarity">
    <text evidence="1">Belongs to the universal ribosomal protein uS2 family.</text>
</comment>
<protein>
    <recommendedName>
        <fullName evidence="1">Small ribosomal subunit protein uS2</fullName>
    </recommendedName>
    <alternativeName>
        <fullName evidence="3">30S ribosomal protein S2</fullName>
    </alternativeName>
</protein>
<name>RS2_ANADF</name>
<organism>
    <name type="scientific">Anaeromyxobacter sp. (strain Fw109-5)</name>
    <dbReference type="NCBI Taxonomy" id="404589"/>
    <lineage>
        <taxon>Bacteria</taxon>
        <taxon>Pseudomonadati</taxon>
        <taxon>Myxococcota</taxon>
        <taxon>Myxococcia</taxon>
        <taxon>Myxococcales</taxon>
        <taxon>Cystobacterineae</taxon>
        <taxon>Anaeromyxobacteraceae</taxon>
        <taxon>Anaeromyxobacter</taxon>
    </lineage>
</organism>
<gene>
    <name evidence="1" type="primary">rpsB</name>
    <name type="ordered locus">Anae109_0295</name>
</gene>
<accession>A7H716</accession>
<proteinExistence type="inferred from homology"/>
<reference key="1">
    <citation type="journal article" date="2015" name="Genome Announc.">
        <title>Complete genome sequence of Anaeromyxobacter sp. Fw109-5, an anaerobic, metal-reducing bacterium isolated from a contaminated subsurface environment.</title>
        <authorList>
            <person name="Hwang C."/>
            <person name="Copeland A."/>
            <person name="Lucas S."/>
            <person name="Lapidus A."/>
            <person name="Barry K."/>
            <person name="Glavina Del Rio T."/>
            <person name="Dalin E."/>
            <person name="Tice H."/>
            <person name="Pitluck S."/>
            <person name="Sims D."/>
            <person name="Brettin T."/>
            <person name="Bruce D.C."/>
            <person name="Detter J.C."/>
            <person name="Han C.S."/>
            <person name="Schmutz J."/>
            <person name="Larimer F.W."/>
            <person name="Land M.L."/>
            <person name="Hauser L.J."/>
            <person name="Kyrpides N."/>
            <person name="Lykidis A."/>
            <person name="Richardson P."/>
            <person name="Belieav A."/>
            <person name="Sanford R.A."/>
            <person name="Loeffler F.E."/>
            <person name="Fields M.W."/>
        </authorList>
    </citation>
    <scope>NUCLEOTIDE SEQUENCE [LARGE SCALE GENOMIC DNA]</scope>
    <source>
        <strain>Fw109-5</strain>
    </source>
</reference>
<keyword id="KW-1185">Reference proteome</keyword>
<keyword id="KW-0687">Ribonucleoprotein</keyword>
<keyword id="KW-0689">Ribosomal protein</keyword>
<sequence length="315" mass="35037">MASALTTQGTAITMKQLLEAGVHFGHQTKRWNPKMKPYIFGARNGIYIIDLQKTVGLARGALRFVSDAVAKGGMVLFVGTKKQAQDAIREEASRSGQYHVTNRWLGGTLTNFKTVKQGIDRLKTIEKMAADGTYERLPKKEVAQLEREREKLEKNLGGIKEMSRLPAAIFVIDTKKEHIAVHEANRLGIPVVAVVDTNCDPEGIEYVIPGNDDAIRSIRLFTGKIAEACIEGRARYSTWAAQHGEERRPGEEDRDAASERGQKDRRDRRDRRGGGRDRERREPREDRAAASANVEVVRKGEVTPAQPAPGSDANR</sequence>
<feature type="chain" id="PRO_0000351976" description="Small ribosomal subunit protein uS2">
    <location>
        <begin position="1"/>
        <end position="315"/>
    </location>
</feature>
<feature type="region of interest" description="Disordered" evidence="2">
    <location>
        <begin position="241"/>
        <end position="315"/>
    </location>
</feature>
<feature type="compositionally biased region" description="Basic and acidic residues" evidence="2">
    <location>
        <begin position="243"/>
        <end position="288"/>
    </location>
</feature>